<feature type="chain" id="PRO_1000212497" description="Phosphatidylserine decarboxylase beta chain" evidence="1">
    <location>
        <begin position="1"/>
        <end position="205"/>
    </location>
</feature>
<feature type="chain" id="PRO_1000212498" description="Phosphatidylserine decarboxylase alpha chain" evidence="1">
    <location>
        <begin position="206"/>
        <end position="237"/>
    </location>
</feature>
<feature type="active site" description="Schiff-base intermediate with substrate; via pyruvic acid" evidence="1">
    <location>
        <position position="206"/>
    </location>
</feature>
<feature type="site" description="Cleavage (non-hydrolytic); by autocatalysis" evidence="1">
    <location>
        <begin position="205"/>
        <end position="206"/>
    </location>
</feature>
<feature type="modified residue" description="Pyruvic acid (Ser); by autocatalysis" evidence="1">
    <location>
        <position position="206"/>
    </location>
</feature>
<evidence type="ECO:0000255" key="1">
    <source>
        <dbReference type="HAMAP-Rule" id="MF_00664"/>
    </source>
</evidence>
<dbReference type="EC" id="4.1.1.65" evidence="1"/>
<dbReference type="EMBL" id="AP008957">
    <property type="protein sequence ID" value="BAH32225.1"/>
    <property type="molecule type" value="Genomic_DNA"/>
</dbReference>
<dbReference type="RefSeq" id="WP_003941540.1">
    <property type="nucleotide sequence ID" value="NC_012490.1"/>
</dbReference>
<dbReference type="KEGG" id="rer:RER_15170"/>
<dbReference type="eggNOG" id="COG0688">
    <property type="taxonomic scope" value="Bacteria"/>
</dbReference>
<dbReference type="HOGENOM" id="CLU_072492_0_0_11"/>
<dbReference type="UniPathway" id="UPA00558">
    <property type="reaction ID" value="UER00616"/>
</dbReference>
<dbReference type="Proteomes" id="UP000002204">
    <property type="component" value="Chromosome"/>
</dbReference>
<dbReference type="GO" id="GO:0005886">
    <property type="term" value="C:plasma membrane"/>
    <property type="evidence" value="ECO:0007669"/>
    <property type="project" value="UniProtKB-SubCell"/>
</dbReference>
<dbReference type="GO" id="GO:0004609">
    <property type="term" value="F:phosphatidylserine decarboxylase activity"/>
    <property type="evidence" value="ECO:0007669"/>
    <property type="project" value="UniProtKB-UniRule"/>
</dbReference>
<dbReference type="GO" id="GO:0006646">
    <property type="term" value="P:phosphatidylethanolamine biosynthetic process"/>
    <property type="evidence" value="ECO:0007669"/>
    <property type="project" value="UniProtKB-UniRule"/>
</dbReference>
<dbReference type="HAMAP" id="MF_00664">
    <property type="entry name" value="PS_decarb_PSD_A"/>
    <property type="match status" value="1"/>
</dbReference>
<dbReference type="InterPro" id="IPR003817">
    <property type="entry name" value="PS_Dcarbxylase"/>
</dbReference>
<dbReference type="InterPro" id="IPR033175">
    <property type="entry name" value="PSD-A"/>
</dbReference>
<dbReference type="NCBIfam" id="NF003679">
    <property type="entry name" value="PRK05305.1-3"/>
    <property type="match status" value="1"/>
</dbReference>
<dbReference type="PANTHER" id="PTHR35809">
    <property type="entry name" value="ARCHAETIDYLSERINE DECARBOXYLASE PROENZYME-RELATED"/>
    <property type="match status" value="1"/>
</dbReference>
<dbReference type="PANTHER" id="PTHR35809:SF1">
    <property type="entry name" value="ARCHAETIDYLSERINE DECARBOXYLASE PROENZYME-RELATED"/>
    <property type="match status" value="1"/>
</dbReference>
<dbReference type="Pfam" id="PF02666">
    <property type="entry name" value="PS_Dcarbxylase"/>
    <property type="match status" value="1"/>
</dbReference>
<keyword id="KW-1003">Cell membrane</keyword>
<keyword id="KW-0210">Decarboxylase</keyword>
<keyword id="KW-0444">Lipid biosynthesis</keyword>
<keyword id="KW-0443">Lipid metabolism</keyword>
<keyword id="KW-0456">Lyase</keyword>
<keyword id="KW-0472">Membrane</keyword>
<keyword id="KW-0594">Phospholipid biosynthesis</keyword>
<keyword id="KW-1208">Phospholipid metabolism</keyword>
<keyword id="KW-0670">Pyruvate</keyword>
<keyword id="KW-0865">Zymogen</keyword>
<accession>C0ZUI0</accession>
<gene>
    <name evidence="1" type="primary">psd</name>
    <name type="ordered locus">RER_15170</name>
</gene>
<reference key="1">
    <citation type="submission" date="2005-03" db="EMBL/GenBank/DDBJ databases">
        <title>Comparison of the complete genome sequences of Rhodococcus erythropolis PR4 and Rhodococcus opacus B4.</title>
        <authorList>
            <person name="Takarada H."/>
            <person name="Sekine M."/>
            <person name="Hosoyama A."/>
            <person name="Yamada R."/>
            <person name="Fujisawa T."/>
            <person name="Omata S."/>
            <person name="Shimizu A."/>
            <person name="Tsukatani N."/>
            <person name="Tanikawa S."/>
            <person name="Fujita N."/>
            <person name="Harayama S."/>
        </authorList>
    </citation>
    <scope>NUCLEOTIDE SEQUENCE [LARGE SCALE GENOMIC DNA]</scope>
    <source>
        <strain>PR4 / NBRC 100887</strain>
    </source>
</reference>
<organism>
    <name type="scientific">Rhodococcus erythropolis (strain PR4 / NBRC 100887)</name>
    <dbReference type="NCBI Taxonomy" id="234621"/>
    <lineage>
        <taxon>Bacteria</taxon>
        <taxon>Bacillati</taxon>
        <taxon>Actinomycetota</taxon>
        <taxon>Actinomycetes</taxon>
        <taxon>Mycobacteriales</taxon>
        <taxon>Nocardiaceae</taxon>
        <taxon>Rhodococcus</taxon>
        <taxon>Rhodococcus erythropolis group</taxon>
    </lineage>
</organism>
<protein>
    <recommendedName>
        <fullName evidence="1">Phosphatidylserine decarboxylase proenzyme</fullName>
        <ecNumber evidence="1">4.1.1.65</ecNumber>
    </recommendedName>
    <component>
        <recommendedName>
            <fullName evidence="1">Phosphatidylserine decarboxylase alpha chain</fullName>
        </recommendedName>
    </component>
    <component>
        <recommendedName>
            <fullName evidence="1">Phosphatidylserine decarboxylase beta chain</fullName>
        </recommendedName>
    </component>
</protein>
<proteinExistence type="inferred from homology"/>
<comment type="function">
    <text evidence="1">Catalyzes the formation of phosphatidylethanolamine (PtdEtn) from phosphatidylserine (PtdSer).</text>
</comment>
<comment type="catalytic activity">
    <reaction evidence="1">
        <text>a 1,2-diacyl-sn-glycero-3-phospho-L-serine + H(+) = a 1,2-diacyl-sn-glycero-3-phosphoethanolamine + CO2</text>
        <dbReference type="Rhea" id="RHEA:20828"/>
        <dbReference type="ChEBI" id="CHEBI:15378"/>
        <dbReference type="ChEBI" id="CHEBI:16526"/>
        <dbReference type="ChEBI" id="CHEBI:57262"/>
        <dbReference type="ChEBI" id="CHEBI:64612"/>
        <dbReference type="EC" id="4.1.1.65"/>
    </reaction>
</comment>
<comment type="cofactor">
    <cofactor evidence="1">
        <name>pyruvate</name>
        <dbReference type="ChEBI" id="CHEBI:15361"/>
    </cofactor>
    <text evidence="1">Binds 1 pyruvoyl group covalently per subunit.</text>
</comment>
<comment type="pathway">
    <text evidence="1">Phospholipid metabolism; phosphatidylethanolamine biosynthesis; phosphatidylethanolamine from CDP-diacylglycerol: step 2/2.</text>
</comment>
<comment type="subunit">
    <text evidence="1">Heterodimer of a large membrane-associated beta subunit and a small pyruvoyl-containing alpha subunit.</text>
</comment>
<comment type="subcellular location">
    <subcellularLocation>
        <location evidence="1">Cell membrane</location>
        <topology evidence="1">Peripheral membrane protein</topology>
    </subcellularLocation>
</comment>
<comment type="PTM">
    <text evidence="1">Is synthesized initially as an inactive proenzyme. Formation of the active enzyme involves a self-maturation process in which the active site pyruvoyl group is generated from an internal serine residue via an autocatalytic post-translational modification. Two non-identical subunits are generated from the proenzyme in this reaction, and the pyruvate is formed at the N-terminus of the alpha chain, which is derived from the carboxyl end of the proenzyme. The post-translation cleavage follows an unusual pathway, termed non-hydrolytic serinolysis, in which the side chain hydroxyl group of the serine supplies its oxygen atom to form the C-terminus of the beta chain, while the remainder of the serine residue undergoes an oxidative deamination to produce ammonia and the pyruvoyl prosthetic group on the alpha chain.</text>
</comment>
<comment type="similarity">
    <text evidence="1">Belongs to the phosphatidylserine decarboxylase family. PSD-A subfamily.</text>
</comment>
<sequence length="237" mass="24993">MARRPTPPGTPQPTGIGHIVDLVRHAIPPLHPAGLPFVLAPLGVAALGRNRKWVRRAGLTTAAACATFFRHPHRVPPNRIGVVVAPADGEVALVDNAVPPAELNLGSEPRPRVSIFLSVLDVHVQRSPVGGTVKEVVHQAGKFLSADLADASEVNERNSMLIETADGHDVAVVQIAGLLARRIVCYAGVGDVLPIGDTYGLIRFGSRVDTYFPAGTTLLVEPGQRTIGAETVIAQLP</sequence>
<name>PSD_RHOE4</name>